<name>SECA_CHLAB</name>
<proteinExistence type="inferred from homology"/>
<evidence type="ECO:0000255" key="1">
    <source>
        <dbReference type="HAMAP-Rule" id="MF_01382"/>
    </source>
</evidence>
<accession>Q5L4W3</accession>
<protein>
    <recommendedName>
        <fullName evidence="1">Protein translocase subunit SecA</fullName>
        <ecNumber evidence="1">7.4.2.8</ecNumber>
    </recommendedName>
</protein>
<organism>
    <name type="scientific">Chlamydia abortus (strain DSM 27085 / S26/3)</name>
    <name type="common">Chlamydophila abortus</name>
    <dbReference type="NCBI Taxonomy" id="218497"/>
    <lineage>
        <taxon>Bacteria</taxon>
        <taxon>Pseudomonadati</taxon>
        <taxon>Chlamydiota</taxon>
        <taxon>Chlamydiia</taxon>
        <taxon>Chlamydiales</taxon>
        <taxon>Chlamydiaceae</taxon>
        <taxon>Chlamydia/Chlamydophila group</taxon>
        <taxon>Chlamydia</taxon>
    </lineage>
</organism>
<feature type="chain" id="PRO_1000073468" description="Protein translocase subunit SecA">
    <location>
        <begin position="1"/>
        <end position="969"/>
    </location>
</feature>
<feature type="binding site" evidence="1">
    <location>
        <position position="99"/>
    </location>
    <ligand>
        <name>ATP</name>
        <dbReference type="ChEBI" id="CHEBI:30616"/>
    </ligand>
</feature>
<feature type="binding site" evidence="1">
    <location>
        <begin position="117"/>
        <end position="121"/>
    </location>
    <ligand>
        <name>ATP</name>
        <dbReference type="ChEBI" id="CHEBI:30616"/>
    </ligand>
</feature>
<feature type="binding site" evidence="1">
    <location>
        <position position="631"/>
    </location>
    <ligand>
        <name>ATP</name>
        <dbReference type="ChEBI" id="CHEBI:30616"/>
    </ligand>
</feature>
<keyword id="KW-0067">ATP-binding</keyword>
<keyword id="KW-0997">Cell inner membrane</keyword>
<keyword id="KW-1003">Cell membrane</keyword>
<keyword id="KW-0963">Cytoplasm</keyword>
<keyword id="KW-0472">Membrane</keyword>
<keyword id="KW-0547">Nucleotide-binding</keyword>
<keyword id="KW-0653">Protein transport</keyword>
<keyword id="KW-1278">Translocase</keyword>
<keyword id="KW-0811">Translocation</keyword>
<keyword id="KW-0813">Transport</keyword>
<dbReference type="EC" id="7.4.2.8" evidence="1"/>
<dbReference type="EMBL" id="CR848038">
    <property type="protein sequence ID" value="CAH64333.1"/>
    <property type="molecule type" value="Genomic_DNA"/>
</dbReference>
<dbReference type="RefSeq" id="WP_011097405.1">
    <property type="nucleotide sequence ID" value="NC_004552.2"/>
</dbReference>
<dbReference type="SMR" id="Q5L4W3"/>
<dbReference type="KEGG" id="cab:CAB894"/>
<dbReference type="eggNOG" id="COG0653">
    <property type="taxonomic scope" value="Bacteria"/>
</dbReference>
<dbReference type="HOGENOM" id="CLU_005314_3_0_0"/>
<dbReference type="OrthoDB" id="9805579at2"/>
<dbReference type="Proteomes" id="UP000001012">
    <property type="component" value="Chromosome"/>
</dbReference>
<dbReference type="GO" id="GO:0031522">
    <property type="term" value="C:cell envelope Sec protein transport complex"/>
    <property type="evidence" value="ECO:0007669"/>
    <property type="project" value="TreeGrafter"/>
</dbReference>
<dbReference type="GO" id="GO:0005829">
    <property type="term" value="C:cytosol"/>
    <property type="evidence" value="ECO:0007669"/>
    <property type="project" value="TreeGrafter"/>
</dbReference>
<dbReference type="GO" id="GO:0005886">
    <property type="term" value="C:plasma membrane"/>
    <property type="evidence" value="ECO:0007669"/>
    <property type="project" value="UniProtKB-SubCell"/>
</dbReference>
<dbReference type="GO" id="GO:0005524">
    <property type="term" value="F:ATP binding"/>
    <property type="evidence" value="ECO:0007669"/>
    <property type="project" value="UniProtKB-UniRule"/>
</dbReference>
<dbReference type="GO" id="GO:0008564">
    <property type="term" value="F:protein-exporting ATPase activity"/>
    <property type="evidence" value="ECO:0007669"/>
    <property type="project" value="UniProtKB-EC"/>
</dbReference>
<dbReference type="GO" id="GO:0065002">
    <property type="term" value="P:intracellular protein transmembrane transport"/>
    <property type="evidence" value="ECO:0007669"/>
    <property type="project" value="UniProtKB-UniRule"/>
</dbReference>
<dbReference type="GO" id="GO:0017038">
    <property type="term" value="P:protein import"/>
    <property type="evidence" value="ECO:0007669"/>
    <property type="project" value="InterPro"/>
</dbReference>
<dbReference type="GO" id="GO:0006605">
    <property type="term" value="P:protein targeting"/>
    <property type="evidence" value="ECO:0007669"/>
    <property type="project" value="UniProtKB-UniRule"/>
</dbReference>
<dbReference type="GO" id="GO:0043952">
    <property type="term" value="P:protein transport by the Sec complex"/>
    <property type="evidence" value="ECO:0007669"/>
    <property type="project" value="TreeGrafter"/>
</dbReference>
<dbReference type="CDD" id="cd17928">
    <property type="entry name" value="DEXDc_SecA"/>
    <property type="match status" value="1"/>
</dbReference>
<dbReference type="CDD" id="cd18803">
    <property type="entry name" value="SF2_C_secA"/>
    <property type="match status" value="1"/>
</dbReference>
<dbReference type="FunFam" id="3.40.50.300:FF:000429">
    <property type="entry name" value="Preprotein translocase subunit SecA"/>
    <property type="match status" value="1"/>
</dbReference>
<dbReference type="FunFam" id="3.40.50.300:FF:000787">
    <property type="entry name" value="Protein translocase subunit SecA"/>
    <property type="match status" value="1"/>
</dbReference>
<dbReference type="Gene3D" id="1.10.3060.10">
    <property type="entry name" value="Helical scaffold and wing domains of SecA"/>
    <property type="match status" value="1"/>
</dbReference>
<dbReference type="Gene3D" id="3.40.50.300">
    <property type="entry name" value="P-loop containing nucleotide triphosphate hydrolases"/>
    <property type="match status" value="3"/>
</dbReference>
<dbReference type="Gene3D" id="3.90.1440.10">
    <property type="entry name" value="SecA, preprotein cross-linking domain"/>
    <property type="match status" value="1"/>
</dbReference>
<dbReference type="HAMAP" id="MF_01382">
    <property type="entry name" value="SecA"/>
    <property type="match status" value="1"/>
</dbReference>
<dbReference type="InterPro" id="IPR014001">
    <property type="entry name" value="Helicase_ATP-bd"/>
</dbReference>
<dbReference type="InterPro" id="IPR001650">
    <property type="entry name" value="Helicase_C-like"/>
</dbReference>
<dbReference type="InterPro" id="IPR027417">
    <property type="entry name" value="P-loop_NTPase"/>
</dbReference>
<dbReference type="InterPro" id="IPR000185">
    <property type="entry name" value="SecA"/>
</dbReference>
<dbReference type="InterPro" id="IPR020937">
    <property type="entry name" value="SecA_CS"/>
</dbReference>
<dbReference type="InterPro" id="IPR011115">
    <property type="entry name" value="SecA_DEAD"/>
</dbReference>
<dbReference type="InterPro" id="IPR014018">
    <property type="entry name" value="SecA_motor_DEAD"/>
</dbReference>
<dbReference type="InterPro" id="IPR011130">
    <property type="entry name" value="SecA_preprotein_X-link_dom"/>
</dbReference>
<dbReference type="InterPro" id="IPR044722">
    <property type="entry name" value="SecA_SF2_C"/>
</dbReference>
<dbReference type="InterPro" id="IPR011116">
    <property type="entry name" value="SecA_Wing/Scaffold"/>
</dbReference>
<dbReference type="InterPro" id="IPR036266">
    <property type="entry name" value="SecA_Wing/Scaffold_sf"/>
</dbReference>
<dbReference type="InterPro" id="IPR036670">
    <property type="entry name" value="SecA_X-link_sf"/>
</dbReference>
<dbReference type="NCBIfam" id="TIGR00963">
    <property type="entry name" value="secA"/>
    <property type="match status" value="1"/>
</dbReference>
<dbReference type="PANTHER" id="PTHR30612:SF0">
    <property type="entry name" value="CHLOROPLAST PROTEIN-TRANSPORTING ATPASE"/>
    <property type="match status" value="1"/>
</dbReference>
<dbReference type="PANTHER" id="PTHR30612">
    <property type="entry name" value="SECA INNER MEMBRANE COMPONENT OF SEC PROTEIN SECRETION SYSTEM"/>
    <property type="match status" value="1"/>
</dbReference>
<dbReference type="Pfam" id="PF21090">
    <property type="entry name" value="P-loop_SecA"/>
    <property type="match status" value="1"/>
</dbReference>
<dbReference type="Pfam" id="PF07517">
    <property type="entry name" value="SecA_DEAD"/>
    <property type="match status" value="1"/>
</dbReference>
<dbReference type="Pfam" id="PF01043">
    <property type="entry name" value="SecA_PP_bind"/>
    <property type="match status" value="1"/>
</dbReference>
<dbReference type="Pfam" id="PF07516">
    <property type="entry name" value="SecA_SW"/>
    <property type="match status" value="1"/>
</dbReference>
<dbReference type="PRINTS" id="PR00906">
    <property type="entry name" value="SECA"/>
</dbReference>
<dbReference type="SMART" id="SM00957">
    <property type="entry name" value="SecA_DEAD"/>
    <property type="match status" value="1"/>
</dbReference>
<dbReference type="SMART" id="SM00958">
    <property type="entry name" value="SecA_PP_bind"/>
    <property type="match status" value="1"/>
</dbReference>
<dbReference type="SUPFAM" id="SSF81886">
    <property type="entry name" value="Helical scaffold and wing domains of SecA"/>
    <property type="match status" value="1"/>
</dbReference>
<dbReference type="SUPFAM" id="SSF52540">
    <property type="entry name" value="P-loop containing nucleoside triphosphate hydrolases"/>
    <property type="match status" value="2"/>
</dbReference>
<dbReference type="SUPFAM" id="SSF81767">
    <property type="entry name" value="Pre-protein crosslinking domain of SecA"/>
    <property type="match status" value="1"/>
</dbReference>
<dbReference type="PROSITE" id="PS01312">
    <property type="entry name" value="SECA"/>
    <property type="match status" value="1"/>
</dbReference>
<dbReference type="PROSITE" id="PS51196">
    <property type="entry name" value="SECA_MOTOR_DEAD"/>
    <property type="match status" value="1"/>
</dbReference>
<comment type="function">
    <text evidence="1">Part of the Sec protein translocase complex. Interacts with the SecYEG preprotein conducting channel. Has a central role in coupling the hydrolysis of ATP to the transfer of proteins into and across the cell membrane, serving as an ATP-driven molecular motor driving the stepwise translocation of polypeptide chains across the membrane.</text>
</comment>
<comment type="catalytic activity">
    <reaction evidence="1">
        <text>ATP + H2O + cellular proteinSide 1 = ADP + phosphate + cellular proteinSide 2.</text>
        <dbReference type="EC" id="7.4.2.8"/>
    </reaction>
</comment>
<comment type="subunit">
    <text evidence="1">Monomer and homodimer. Part of the essential Sec protein translocation apparatus which comprises SecA, SecYEG and auxiliary proteins SecDF. Other proteins may also be involved.</text>
</comment>
<comment type="subcellular location">
    <subcellularLocation>
        <location evidence="1">Cell inner membrane</location>
        <topology evidence="1">Peripheral membrane protein</topology>
        <orientation evidence="1">Cytoplasmic side</orientation>
    </subcellularLocation>
    <subcellularLocation>
        <location evidence="1">Cytoplasm</location>
    </subcellularLocation>
    <text evidence="1">Distribution is 50-50.</text>
</comment>
<comment type="similarity">
    <text evidence="1">Belongs to the SecA family.</text>
</comment>
<sequence>MLDFLKRFFGSSQERTLKKFQKLVDKVNLYDEMLAPLSDEELRNKTAELKKRYQDGESLDDMLPEAYAVVKNVCRRLTGTPVEVSGYHQNWDMVPYDVQVLGAIAMHKGFITEMQTGEGKTLTAVMPLYLNALTGKPVHLVTVNDYLAQRDCEWVGSILRWLGLTTGVLISGSPLEKRKDIYRCDVVYGTASEFGFDYLRDNSIATSVDEQVGRGFYFAIIDEVDSILIDEARTPLIISGPGEKHNPVYFELKDKVADLVQLQRELCNQLALEARRGLELFLDMDILPKDKKVIEAISEFCRSLWLVSKGMPLNRVLRRVREHPDLRAMIDKWDTYYHAEQNKEESIEKLSQLYIIVDEHNNDFELTDRGMQQWVDKAGGSAEDFVMMDMGHEYALIDGDDTLSPTEKINRKIAISEEDTRRKARAHGLRQLLRAHLLMERDVDYIVRNDQIVIIDEHTGRPQPGRRFSEGLHQAIEAKEHVTIRKESQTFATVTLQNFFRLYEKLAGMTGTAITESKEFKEIYNLYVLQVPTFKECLRVDHNDEFYMTEREKYHAIVKEIARIHAVGNPILIGTESVEVSEKLSRILRQNRIEHTVLNAKNHAQEAEIIAAAGKLGAVTVATNMAGRGTDIKLDEEAVVVGGLHVIGTSRHQSRRIDRQLRGRCARLGDPGSAKFFLSFEDRLMRLFASPKLNALIRHFRPPEGEAMSDPMFNKLIETAQKRVEARNYTIRKHTLEYDDVMNRQRQTIYAFRNDVIRSEDIFGLAKEAISHVALMIASLIVSRDHPTGNSLPRLEEWMNYSFPLQLNIEELKRLKSIDAIAERVADDLIEVFQNKFASMVQEITEAAGEKVDANGVCKDVIRSVMIMHIDEQWKIHLVDMDLLRSEVGLRTVGQKDPLIEFKHESFLLFESLIRDIRIAIVKHLFRLELTMTREQRPQNVVPVVATSFQNNENFGPLELTVISDSDDE</sequence>
<gene>
    <name evidence="1" type="primary">secA</name>
    <name type="ordered locus">CAB894</name>
</gene>
<reference key="1">
    <citation type="journal article" date="2005" name="Genome Res.">
        <title>The Chlamydophila abortus genome sequence reveals an array of variable proteins that contribute to interspecies variation.</title>
        <authorList>
            <person name="Thomson N.R."/>
            <person name="Yeats C."/>
            <person name="Bell K."/>
            <person name="Holden M.T.G."/>
            <person name="Bentley S.D."/>
            <person name="Livingstone M."/>
            <person name="Cerdeno-Tarraga A.-M."/>
            <person name="Harris B."/>
            <person name="Doggett J."/>
            <person name="Ormond D."/>
            <person name="Mungall K."/>
            <person name="Clarke K."/>
            <person name="Feltwell T."/>
            <person name="Hance Z."/>
            <person name="Sanders M."/>
            <person name="Quail M.A."/>
            <person name="Price C."/>
            <person name="Barrell B.G."/>
            <person name="Parkhill J."/>
            <person name="Longbottom D."/>
        </authorList>
    </citation>
    <scope>NUCLEOTIDE SEQUENCE [LARGE SCALE GENOMIC DNA]</scope>
    <source>
        <strain>DSM 27085 / S26/3</strain>
    </source>
</reference>